<dbReference type="EMBL" id="AE006468">
    <property type="protein sequence ID" value="AAL22267.1"/>
    <property type="molecule type" value="Genomic_DNA"/>
</dbReference>
<dbReference type="RefSeq" id="NP_462308.1">
    <property type="nucleotide sequence ID" value="NC_003197.2"/>
</dbReference>
<dbReference type="RefSeq" id="WP_000460663.1">
    <property type="nucleotide sequence ID" value="NC_003197.2"/>
</dbReference>
<dbReference type="SMR" id="P66822"/>
<dbReference type="STRING" id="99287.STM3404"/>
<dbReference type="PaxDb" id="99287-STM3404"/>
<dbReference type="GeneID" id="1254927"/>
<dbReference type="KEGG" id="stm:STM3404"/>
<dbReference type="PATRIC" id="fig|99287.12.peg.3602"/>
<dbReference type="HOGENOM" id="CLU_133242_0_0_6"/>
<dbReference type="OMA" id="DLKWVVM"/>
<dbReference type="PhylomeDB" id="P66822"/>
<dbReference type="BioCyc" id="SENT99287:STM3404-MONOMER"/>
<dbReference type="Proteomes" id="UP000001014">
    <property type="component" value="Chromosome"/>
</dbReference>
<dbReference type="HAMAP" id="MF_00598">
    <property type="entry name" value="Smg"/>
    <property type="match status" value="1"/>
</dbReference>
<dbReference type="InterPro" id="IPR007456">
    <property type="entry name" value="Smg"/>
</dbReference>
<dbReference type="NCBIfam" id="NF002897">
    <property type="entry name" value="PRK03430.1"/>
    <property type="match status" value="1"/>
</dbReference>
<dbReference type="PANTHER" id="PTHR38692">
    <property type="entry name" value="PROTEIN SMG"/>
    <property type="match status" value="1"/>
</dbReference>
<dbReference type="PANTHER" id="PTHR38692:SF1">
    <property type="entry name" value="PROTEIN SMG"/>
    <property type="match status" value="1"/>
</dbReference>
<dbReference type="Pfam" id="PF04361">
    <property type="entry name" value="DUF494"/>
    <property type="match status" value="1"/>
</dbReference>
<organism>
    <name type="scientific">Salmonella typhimurium (strain LT2 / SGSC1412 / ATCC 700720)</name>
    <dbReference type="NCBI Taxonomy" id="99287"/>
    <lineage>
        <taxon>Bacteria</taxon>
        <taxon>Pseudomonadati</taxon>
        <taxon>Pseudomonadota</taxon>
        <taxon>Gammaproteobacteria</taxon>
        <taxon>Enterobacterales</taxon>
        <taxon>Enterobacteriaceae</taxon>
        <taxon>Salmonella</taxon>
    </lineage>
</organism>
<name>SMG_SALTY</name>
<sequence length="157" mass="18540">MFDVLMYLFETYIHNEAELRVDQDRLERDLTDAGFDREDIYNALLWLEKLADYQDGLAEPMQLASDPLSMRIYTVEECERLDASCRGFLLFLEQIQVLNLETREMVIERVLALDTAEFDLEDLKWVILMVLFNIPGCENAYQQMEELLFEVNEGMLH</sequence>
<protein>
    <recommendedName>
        <fullName evidence="1">Protein Smg</fullName>
    </recommendedName>
</protein>
<accession>P66822</accession>
<accession>Q8XFK8</accession>
<keyword id="KW-1185">Reference proteome</keyword>
<reference key="1">
    <citation type="journal article" date="2001" name="Nature">
        <title>Complete genome sequence of Salmonella enterica serovar Typhimurium LT2.</title>
        <authorList>
            <person name="McClelland M."/>
            <person name="Sanderson K.E."/>
            <person name="Spieth J."/>
            <person name="Clifton S.W."/>
            <person name="Latreille P."/>
            <person name="Courtney L."/>
            <person name="Porwollik S."/>
            <person name="Ali J."/>
            <person name="Dante M."/>
            <person name="Du F."/>
            <person name="Hou S."/>
            <person name="Layman D."/>
            <person name="Leonard S."/>
            <person name="Nguyen C."/>
            <person name="Scott K."/>
            <person name="Holmes A."/>
            <person name="Grewal N."/>
            <person name="Mulvaney E."/>
            <person name="Ryan E."/>
            <person name="Sun H."/>
            <person name="Florea L."/>
            <person name="Miller W."/>
            <person name="Stoneking T."/>
            <person name="Nhan M."/>
            <person name="Waterston R."/>
            <person name="Wilson R.K."/>
        </authorList>
    </citation>
    <scope>NUCLEOTIDE SEQUENCE [LARGE SCALE GENOMIC DNA]</scope>
    <source>
        <strain>LT2 / SGSC1412 / ATCC 700720</strain>
    </source>
</reference>
<feature type="chain" id="PRO_0000209180" description="Protein Smg">
    <location>
        <begin position="1"/>
        <end position="157"/>
    </location>
</feature>
<gene>
    <name evidence="1" type="primary">smg</name>
    <name type="ordered locus">STM3404</name>
</gene>
<evidence type="ECO:0000255" key="1">
    <source>
        <dbReference type="HAMAP-Rule" id="MF_00598"/>
    </source>
</evidence>
<comment type="similarity">
    <text evidence="1">Belongs to the Smg family.</text>
</comment>
<proteinExistence type="inferred from homology"/>